<feature type="chain" id="PRO_0000095186" description="Adenylosuccinate synthetase">
    <location>
        <begin position="1"/>
        <end position="411"/>
    </location>
</feature>
<feature type="active site" description="Proton acceptor" evidence="1">
    <location>
        <position position="12"/>
    </location>
</feature>
<feature type="active site" description="Proton donor" evidence="1">
    <location>
        <position position="40"/>
    </location>
</feature>
<feature type="binding site" evidence="1">
    <location>
        <begin position="11"/>
        <end position="17"/>
    </location>
    <ligand>
        <name>GTP</name>
        <dbReference type="ChEBI" id="CHEBI:37565"/>
    </ligand>
</feature>
<feature type="binding site" description="in other chain" evidence="1">
    <location>
        <begin position="12"/>
        <end position="15"/>
    </location>
    <ligand>
        <name>IMP</name>
        <dbReference type="ChEBI" id="CHEBI:58053"/>
        <note>ligand shared between dimeric partners</note>
    </ligand>
</feature>
<feature type="binding site" evidence="1">
    <location>
        <position position="12"/>
    </location>
    <ligand>
        <name>Mg(2+)</name>
        <dbReference type="ChEBI" id="CHEBI:18420"/>
    </ligand>
</feature>
<feature type="binding site" description="in other chain" evidence="1">
    <location>
        <begin position="37"/>
        <end position="40"/>
    </location>
    <ligand>
        <name>IMP</name>
        <dbReference type="ChEBI" id="CHEBI:58053"/>
        <note>ligand shared between dimeric partners</note>
    </ligand>
</feature>
<feature type="binding site" evidence="1">
    <location>
        <begin position="39"/>
        <end position="41"/>
    </location>
    <ligand>
        <name>GTP</name>
        <dbReference type="ChEBI" id="CHEBI:37565"/>
    </ligand>
</feature>
<feature type="binding site" evidence="1">
    <location>
        <position position="39"/>
    </location>
    <ligand>
        <name>Mg(2+)</name>
        <dbReference type="ChEBI" id="CHEBI:18420"/>
    </ligand>
</feature>
<feature type="binding site" description="in other chain" evidence="1">
    <location>
        <position position="121"/>
    </location>
    <ligand>
        <name>IMP</name>
        <dbReference type="ChEBI" id="CHEBI:58053"/>
        <note>ligand shared between dimeric partners</note>
    </ligand>
</feature>
<feature type="binding site" evidence="1">
    <location>
        <position position="135"/>
    </location>
    <ligand>
        <name>IMP</name>
        <dbReference type="ChEBI" id="CHEBI:58053"/>
        <note>ligand shared between dimeric partners</note>
    </ligand>
</feature>
<feature type="binding site" description="in other chain" evidence="1">
    <location>
        <position position="215"/>
    </location>
    <ligand>
        <name>IMP</name>
        <dbReference type="ChEBI" id="CHEBI:58053"/>
        <note>ligand shared between dimeric partners</note>
    </ligand>
</feature>
<feature type="binding site" description="in other chain" evidence="1">
    <location>
        <position position="230"/>
    </location>
    <ligand>
        <name>IMP</name>
        <dbReference type="ChEBI" id="CHEBI:58053"/>
        <note>ligand shared between dimeric partners</note>
    </ligand>
</feature>
<feature type="binding site" evidence="1">
    <location>
        <begin position="290"/>
        <end position="296"/>
    </location>
    <ligand>
        <name>substrate</name>
    </ligand>
</feature>
<feature type="binding site" description="in other chain" evidence="1">
    <location>
        <position position="294"/>
    </location>
    <ligand>
        <name>IMP</name>
        <dbReference type="ChEBI" id="CHEBI:58053"/>
        <note>ligand shared between dimeric partners</note>
    </ligand>
</feature>
<feature type="binding site" evidence="1">
    <location>
        <position position="296"/>
    </location>
    <ligand>
        <name>GTP</name>
        <dbReference type="ChEBI" id="CHEBI:37565"/>
    </ligand>
</feature>
<feature type="binding site" evidence="1">
    <location>
        <begin position="322"/>
        <end position="324"/>
    </location>
    <ligand>
        <name>GTP</name>
        <dbReference type="ChEBI" id="CHEBI:37565"/>
    </ligand>
</feature>
<feature type="binding site" evidence="1">
    <location>
        <begin position="400"/>
        <end position="402"/>
    </location>
    <ligand>
        <name>GTP</name>
        <dbReference type="ChEBI" id="CHEBI:37565"/>
    </ligand>
</feature>
<feature type="strand" evidence="2">
    <location>
        <begin position="3"/>
        <end position="11"/>
    </location>
</feature>
<feature type="helix" evidence="2">
    <location>
        <begin position="15"/>
        <end position="22"/>
    </location>
</feature>
<feature type="helix" evidence="2">
    <location>
        <begin position="23"/>
        <end position="25"/>
    </location>
</feature>
<feature type="strand" evidence="2">
    <location>
        <begin position="27"/>
        <end position="31"/>
    </location>
</feature>
<feature type="strand" evidence="2">
    <location>
        <begin position="40"/>
        <end position="44"/>
    </location>
</feature>
<feature type="strand" evidence="2">
    <location>
        <begin position="47"/>
        <end position="54"/>
    </location>
</feature>
<feature type="turn" evidence="2">
    <location>
        <begin position="56"/>
        <end position="59"/>
    </location>
</feature>
<feature type="strand" evidence="2">
    <location>
        <begin position="63"/>
        <end position="67"/>
    </location>
</feature>
<feature type="strand" evidence="2">
    <location>
        <begin position="71"/>
        <end position="73"/>
    </location>
</feature>
<feature type="helix" evidence="2">
    <location>
        <begin position="75"/>
        <end position="82"/>
    </location>
</feature>
<feature type="turn" evidence="2">
    <location>
        <begin position="89"/>
        <end position="91"/>
    </location>
</feature>
<feature type="strand" evidence="2">
    <location>
        <begin position="92"/>
        <end position="95"/>
    </location>
</feature>
<feature type="strand" evidence="3">
    <location>
        <begin position="98"/>
        <end position="100"/>
    </location>
</feature>
<feature type="helix" evidence="2">
    <location>
        <begin position="103"/>
        <end position="116"/>
    </location>
</feature>
<feature type="strand" evidence="2">
    <location>
        <begin position="122"/>
        <end position="124"/>
    </location>
</feature>
<feature type="helix" evidence="2">
    <location>
        <begin position="125"/>
        <end position="133"/>
    </location>
</feature>
<feature type="helix" evidence="2">
    <location>
        <begin position="140"/>
        <end position="144"/>
    </location>
</feature>
<feature type="helix" evidence="2">
    <location>
        <begin position="146"/>
        <end position="160"/>
    </location>
</feature>
<feature type="helix" evidence="2">
    <location>
        <begin position="161"/>
        <end position="163"/>
    </location>
</feature>
<feature type="turn" evidence="2">
    <location>
        <begin position="164"/>
        <end position="168"/>
    </location>
</feature>
<feature type="helix" evidence="2">
    <location>
        <begin position="173"/>
        <end position="188"/>
    </location>
</feature>
<feature type="helix" evidence="2">
    <location>
        <begin position="189"/>
        <end position="191"/>
    </location>
</feature>
<feature type="helix" evidence="2">
    <location>
        <begin position="195"/>
        <end position="204"/>
    </location>
</feature>
<feature type="strand" evidence="2">
    <location>
        <begin position="209"/>
        <end position="212"/>
    </location>
</feature>
<feature type="helix" evidence="2">
    <location>
        <begin position="217"/>
        <end position="219"/>
    </location>
</feature>
<feature type="turn" evidence="2">
    <location>
        <begin position="221"/>
        <end position="223"/>
    </location>
</feature>
<feature type="helix" evidence="2">
    <location>
        <begin position="236"/>
        <end position="240"/>
    </location>
</feature>
<feature type="strand" evidence="2">
    <location>
        <begin position="242"/>
        <end position="244"/>
    </location>
</feature>
<feature type="helix" evidence="2">
    <location>
        <begin position="247"/>
        <end position="249"/>
    </location>
</feature>
<feature type="strand" evidence="2">
    <location>
        <begin position="253"/>
        <end position="263"/>
    </location>
</feature>
<feature type="strand" evidence="2">
    <location>
        <begin position="265"/>
        <end position="267"/>
    </location>
</feature>
<feature type="helix" evidence="2">
    <location>
        <begin position="276"/>
        <end position="284"/>
    </location>
</feature>
<feature type="turn" evidence="2">
    <location>
        <begin position="290"/>
        <end position="292"/>
    </location>
</feature>
<feature type="strand" evidence="2">
    <location>
        <begin position="297"/>
        <end position="302"/>
    </location>
</feature>
<feature type="helix" evidence="2">
    <location>
        <begin position="303"/>
        <end position="313"/>
    </location>
</feature>
<feature type="strand" evidence="2">
    <location>
        <begin position="316"/>
        <end position="321"/>
    </location>
</feature>
<feature type="helix" evidence="2">
    <location>
        <begin position="323"/>
        <end position="326"/>
    </location>
</feature>
<feature type="strand" evidence="2">
    <location>
        <begin position="330"/>
        <end position="340"/>
    </location>
</feature>
<feature type="strand" evidence="2">
    <location>
        <begin position="343"/>
        <end position="345"/>
    </location>
</feature>
<feature type="strand" evidence="2">
    <location>
        <begin position="356"/>
        <end position="363"/>
    </location>
</feature>
<feature type="helix" evidence="2">
    <location>
        <begin position="374"/>
        <end position="376"/>
    </location>
</feature>
<feature type="helix" evidence="2">
    <location>
        <begin position="379"/>
        <end position="392"/>
    </location>
</feature>
<feature type="strand" evidence="2">
    <location>
        <begin position="396"/>
        <end position="400"/>
    </location>
</feature>
<feature type="strand" evidence="2">
    <location>
        <begin position="402"/>
        <end position="404"/>
    </location>
</feature>
<feature type="strand" evidence="2">
    <location>
        <begin position="407"/>
        <end position="410"/>
    </location>
</feature>
<comment type="function">
    <text evidence="1">Plays an important role in the de novo pathway of purine nucleotide biosynthesis. Catalyzes the first committed step in the biosynthesis of AMP from IMP.</text>
</comment>
<comment type="catalytic activity">
    <reaction evidence="1">
        <text>IMP + L-aspartate + GTP = N(6)-(1,2-dicarboxyethyl)-AMP + GDP + phosphate + 2 H(+)</text>
        <dbReference type="Rhea" id="RHEA:15753"/>
        <dbReference type="ChEBI" id="CHEBI:15378"/>
        <dbReference type="ChEBI" id="CHEBI:29991"/>
        <dbReference type="ChEBI" id="CHEBI:37565"/>
        <dbReference type="ChEBI" id="CHEBI:43474"/>
        <dbReference type="ChEBI" id="CHEBI:57567"/>
        <dbReference type="ChEBI" id="CHEBI:58053"/>
        <dbReference type="ChEBI" id="CHEBI:58189"/>
        <dbReference type="EC" id="6.3.4.4"/>
    </reaction>
</comment>
<comment type="cofactor">
    <cofactor evidence="1">
        <name>Mg(2+)</name>
        <dbReference type="ChEBI" id="CHEBI:18420"/>
    </cofactor>
    <text evidence="1">Binds 1 Mg(2+) ion per subunit.</text>
</comment>
<comment type="pathway">
    <text evidence="1">Purine metabolism; AMP biosynthesis via de novo pathway; AMP from IMP: step 1/2.</text>
</comment>
<comment type="subunit">
    <text evidence="1">Homodimer.</text>
</comment>
<comment type="subcellular location">
    <subcellularLocation>
        <location evidence="1">Cytoplasm</location>
    </subcellularLocation>
</comment>
<comment type="similarity">
    <text evidence="1">Belongs to the adenylosuccinate synthetase family.</text>
</comment>
<accession>P56137</accession>
<name>PURA_HELPY</name>
<evidence type="ECO:0000255" key="1">
    <source>
        <dbReference type="HAMAP-Rule" id="MF_00011"/>
    </source>
</evidence>
<evidence type="ECO:0007829" key="2">
    <source>
        <dbReference type="PDB" id="6ZXQ"/>
    </source>
</evidence>
<evidence type="ECO:0007829" key="3">
    <source>
        <dbReference type="PDB" id="7PVO"/>
    </source>
</evidence>
<keyword id="KW-0002">3D-structure</keyword>
<keyword id="KW-0963">Cytoplasm</keyword>
<keyword id="KW-0342">GTP-binding</keyword>
<keyword id="KW-0436">Ligase</keyword>
<keyword id="KW-0460">Magnesium</keyword>
<keyword id="KW-0479">Metal-binding</keyword>
<keyword id="KW-0547">Nucleotide-binding</keyword>
<keyword id="KW-0658">Purine biosynthesis</keyword>
<keyword id="KW-1185">Reference proteome</keyword>
<organism>
    <name type="scientific">Helicobacter pylori (strain ATCC 700392 / 26695)</name>
    <name type="common">Campylobacter pylori</name>
    <dbReference type="NCBI Taxonomy" id="85962"/>
    <lineage>
        <taxon>Bacteria</taxon>
        <taxon>Pseudomonadati</taxon>
        <taxon>Campylobacterota</taxon>
        <taxon>Epsilonproteobacteria</taxon>
        <taxon>Campylobacterales</taxon>
        <taxon>Helicobacteraceae</taxon>
        <taxon>Helicobacter</taxon>
    </lineage>
</organism>
<proteinExistence type="evidence at protein level"/>
<gene>
    <name evidence="1" type="primary">purA</name>
    <name type="ordered locus">HP_0255</name>
</gene>
<protein>
    <recommendedName>
        <fullName evidence="1">Adenylosuccinate synthetase</fullName>
        <shortName evidence="1">AMPSase</shortName>
        <shortName evidence="1">AdSS</shortName>
        <ecNumber evidence="1">6.3.4.4</ecNumber>
    </recommendedName>
    <alternativeName>
        <fullName evidence="1">IMP--aspartate ligase</fullName>
    </alternativeName>
</protein>
<reference key="1">
    <citation type="journal article" date="1997" name="Nature">
        <title>The complete genome sequence of the gastric pathogen Helicobacter pylori.</title>
        <authorList>
            <person name="Tomb J.-F."/>
            <person name="White O."/>
            <person name="Kerlavage A.R."/>
            <person name="Clayton R.A."/>
            <person name="Sutton G.G."/>
            <person name="Fleischmann R.D."/>
            <person name="Ketchum K.A."/>
            <person name="Klenk H.-P."/>
            <person name="Gill S.R."/>
            <person name="Dougherty B.A."/>
            <person name="Nelson K.E."/>
            <person name="Quackenbush J."/>
            <person name="Zhou L."/>
            <person name="Kirkness E.F."/>
            <person name="Peterson S.N."/>
            <person name="Loftus B.J."/>
            <person name="Richardson D.L."/>
            <person name="Dodson R.J."/>
            <person name="Khalak H.G."/>
            <person name="Glodek A."/>
            <person name="McKenney K."/>
            <person name="FitzGerald L.M."/>
            <person name="Lee N."/>
            <person name="Adams M.D."/>
            <person name="Hickey E.K."/>
            <person name="Berg D.E."/>
            <person name="Gocayne J.D."/>
            <person name="Utterback T.R."/>
            <person name="Peterson J.D."/>
            <person name="Kelley J.M."/>
            <person name="Cotton M.D."/>
            <person name="Weidman J.F."/>
            <person name="Fujii C."/>
            <person name="Bowman C."/>
            <person name="Watthey L."/>
            <person name="Wallin E."/>
            <person name="Hayes W.S."/>
            <person name="Borodovsky M."/>
            <person name="Karp P.D."/>
            <person name="Smith H.O."/>
            <person name="Fraser C.M."/>
            <person name="Venter J.C."/>
        </authorList>
    </citation>
    <scope>NUCLEOTIDE SEQUENCE [LARGE SCALE GENOMIC DNA]</scope>
    <source>
        <strain>ATCC 700392 / 26695</strain>
    </source>
</reference>
<sequence>MADVVVGIQWGDEGKGKIVDRIAKDYDFVVRYQGGHNAGHTIVHKGVKHSLHLMPSGVLYPKCKNIISSAVVVSVKDLCEEISAFEDLENRLFVSDRAHVILPYHAKKDAFKEKSQNIGTTKKGIGPCYEDKMARSGIRMGDLLDDKILEEKLNAHFKAIEPFKKAYDLGENYEKDLMGYFKTYAPKICPFIKDTTSMLIEANQKGEKILLEGAQGTLLDIDLGTYPFVTSSNTTSASACVSTGLNPKAINEVIGITKAYSTRVGNGPFPSEDTTPMGDHLRTKGAEFGTTTKRPRRCGWLDLVALKYACALNGCTQLALMKLDVLDGIDAIKVCVAYERKGERLEIFPSDLKDCVPIYQTFKGWEKSVGVRKLDDLEPNVREYIRFIEKEVGVKIRLISTSPEREDTIFL</sequence>
<dbReference type="EC" id="6.3.4.4" evidence="1"/>
<dbReference type="EMBL" id="AE000511">
    <property type="protein sequence ID" value="AAD07324.1"/>
    <property type="molecule type" value="Genomic_DNA"/>
</dbReference>
<dbReference type="PIR" id="G64551">
    <property type="entry name" value="G64551"/>
</dbReference>
<dbReference type="RefSeq" id="NP_207053.1">
    <property type="nucleotide sequence ID" value="NC_000915.1"/>
</dbReference>
<dbReference type="RefSeq" id="WP_000796173.1">
    <property type="nucleotide sequence ID" value="NC_018939.1"/>
</dbReference>
<dbReference type="PDB" id="6ZXQ">
    <property type="method" value="X-ray"/>
    <property type="resolution" value="1.40 A"/>
    <property type="chains" value="A=1-411"/>
</dbReference>
<dbReference type="PDB" id="7PVO">
    <property type="method" value="X-ray"/>
    <property type="resolution" value="2.00 A"/>
    <property type="chains" value="A=1-411"/>
</dbReference>
<dbReference type="PDB" id="8QWA">
    <property type="method" value="X-ray"/>
    <property type="resolution" value="1.85 A"/>
    <property type="chains" value="A=1-411"/>
</dbReference>
<dbReference type="PDB" id="9F17">
    <property type="method" value="X-ray"/>
    <property type="resolution" value="1.70 A"/>
    <property type="chains" value="A/B=1-411"/>
</dbReference>
<dbReference type="PDBsum" id="6ZXQ"/>
<dbReference type="PDBsum" id="7PVO"/>
<dbReference type="PDBsum" id="8QWA"/>
<dbReference type="PDBsum" id="9F17"/>
<dbReference type="SMR" id="P56137"/>
<dbReference type="DIP" id="DIP-3533N"/>
<dbReference type="FunCoup" id="P56137">
    <property type="interactions" value="385"/>
</dbReference>
<dbReference type="IntAct" id="P56137">
    <property type="interactions" value="1"/>
</dbReference>
<dbReference type="MINT" id="P56137"/>
<dbReference type="STRING" id="85962.HP_0255"/>
<dbReference type="PaxDb" id="85962-C694_01290"/>
<dbReference type="EnsemblBacteria" id="AAD07324">
    <property type="protein sequence ID" value="AAD07324"/>
    <property type="gene ID" value="HP_0255"/>
</dbReference>
<dbReference type="KEGG" id="heo:C694_01290"/>
<dbReference type="KEGG" id="hpy:HP_0255"/>
<dbReference type="PATRIC" id="fig|85962.47.peg.275"/>
<dbReference type="eggNOG" id="COG0104">
    <property type="taxonomic scope" value="Bacteria"/>
</dbReference>
<dbReference type="InParanoid" id="P56137"/>
<dbReference type="OrthoDB" id="9807553at2"/>
<dbReference type="PhylomeDB" id="P56137"/>
<dbReference type="UniPathway" id="UPA00075">
    <property type="reaction ID" value="UER00335"/>
</dbReference>
<dbReference type="Proteomes" id="UP000000429">
    <property type="component" value="Chromosome"/>
</dbReference>
<dbReference type="GO" id="GO:0005737">
    <property type="term" value="C:cytoplasm"/>
    <property type="evidence" value="ECO:0000318"/>
    <property type="project" value="GO_Central"/>
</dbReference>
<dbReference type="GO" id="GO:0004019">
    <property type="term" value="F:adenylosuccinate synthase activity"/>
    <property type="evidence" value="ECO:0000318"/>
    <property type="project" value="GO_Central"/>
</dbReference>
<dbReference type="GO" id="GO:0005525">
    <property type="term" value="F:GTP binding"/>
    <property type="evidence" value="ECO:0007669"/>
    <property type="project" value="UniProtKB-UniRule"/>
</dbReference>
<dbReference type="GO" id="GO:0000287">
    <property type="term" value="F:magnesium ion binding"/>
    <property type="evidence" value="ECO:0007669"/>
    <property type="project" value="UniProtKB-UniRule"/>
</dbReference>
<dbReference type="GO" id="GO:0044208">
    <property type="term" value="P:'de novo' AMP biosynthetic process"/>
    <property type="evidence" value="ECO:0000318"/>
    <property type="project" value="GO_Central"/>
</dbReference>
<dbReference type="GO" id="GO:0046040">
    <property type="term" value="P:IMP metabolic process"/>
    <property type="evidence" value="ECO:0000318"/>
    <property type="project" value="GO_Central"/>
</dbReference>
<dbReference type="CDD" id="cd03108">
    <property type="entry name" value="AdSS"/>
    <property type="match status" value="1"/>
</dbReference>
<dbReference type="FunFam" id="1.10.300.10:FF:000001">
    <property type="entry name" value="Adenylosuccinate synthetase"/>
    <property type="match status" value="1"/>
</dbReference>
<dbReference type="FunFam" id="3.90.170.10:FF:000004">
    <property type="entry name" value="Adenylosuccinate synthetase"/>
    <property type="match status" value="1"/>
</dbReference>
<dbReference type="Gene3D" id="3.40.440.10">
    <property type="entry name" value="Adenylosuccinate Synthetase, subunit A, domain 1"/>
    <property type="match status" value="1"/>
</dbReference>
<dbReference type="Gene3D" id="1.10.300.10">
    <property type="entry name" value="Adenylosuccinate Synthetase, subunit A, domain 2"/>
    <property type="match status" value="1"/>
</dbReference>
<dbReference type="Gene3D" id="3.90.170.10">
    <property type="entry name" value="Adenylosuccinate Synthetase, subunit A, domain 3"/>
    <property type="match status" value="1"/>
</dbReference>
<dbReference type="HAMAP" id="MF_00011">
    <property type="entry name" value="Adenylosucc_synth"/>
    <property type="match status" value="1"/>
</dbReference>
<dbReference type="InterPro" id="IPR018220">
    <property type="entry name" value="Adenylosuccin_syn_GTP-bd"/>
</dbReference>
<dbReference type="InterPro" id="IPR033128">
    <property type="entry name" value="Adenylosuccin_syn_Lys_AS"/>
</dbReference>
<dbReference type="InterPro" id="IPR042109">
    <property type="entry name" value="Adenylosuccinate_synth_dom1"/>
</dbReference>
<dbReference type="InterPro" id="IPR042110">
    <property type="entry name" value="Adenylosuccinate_synth_dom2"/>
</dbReference>
<dbReference type="InterPro" id="IPR042111">
    <property type="entry name" value="Adenylosuccinate_synth_dom3"/>
</dbReference>
<dbReference type="InterPro" id="IPR001114">
    <property type="entry name" value="Adenylosuccinate_synthetase"/>
</dbReference>
<dbReference type="InterPro" id="IPR027417">
    <property type="entry name" value="P-loop_NTPase"/>
</dbReference>
<dbReference type="NCBIfam" id="NF002223">
    <property type="entry name" value="PRK01117.1"/>
    <property type="match status" value="1"/>
</dbReference>
<dbReference type="NCBIfam" id="TIGR00184">
    <property type="entry name" value="purA"/>
    <property type="match status" value="1"/>
</dbReference>
<dbReference type="PANTHER" id="PTHR11846">
    <property type="entry name" value="ADENYLOSUCCINATE SYNTHETASE"/>
    <property type="match status" value="1"/>
</dbReference>
<dbReference type="PANTHER" id="PTHR11846:SF0">
    <property type="entry name" value="ADENYLOSUCCINATE SYNTHETASE"/>
    <property type="match status" value="1"/>
</dbReference>
<dbReference type="Pfam" id="PF00709">
    <property type="entry name" value="Adenylsucc_synt"/>
    <property type="match status" value="1"/>
</dbReference>
<dbReference type="SMART" id="SM00788">
    <property type="entry name" value="Adenylsucc_synt"/>
    <property type="match status" value="1"/>
</dbReference>
<dbReference type="SUPFAM" id="SSF52540">
    <property type="entry name" value="P-loop containing nucleoside triphosphate hydrolases"/>
    <property type="match status" value="1"/>
</dbReference>
<dbReference type="PROSITE" id="PS01266">
    <property type="entry name" value="ADENYLOSUCCIN_SYN_1"/>
    <property type="match status" value="1"/>
</dbReference>
<dbReference type="PROSITE" id="PS00513">
    <property type="entry name" value="ADENYLOSUCCIN_SYN_2"/>
    <property type="match status" value="1"/>
</dbReference>